<gene>
    <name type="ordered locus">VC0395_A1482</name>
    <name type="ordered locus">VC395_2007</name>
</gene>
<feature type="chain" id="PRO_1000072992" description="UPF0227 protein VC0395_A1482/VC395_2007">
    <location>
        <begin position="1"/>
        <end position="179"/>
    </location>
</feature>
<sequence>MIIYLHGFDSNSPGNHEKVLQLQFIDSDVRFINYSTLHPKHDMQHLLKEVHKAIEQSGDPNPLICGVGLGGYWSERIGFLCGIKQVIFNPNLHPELTMQGRIDRPEEYEDISTKCVEKFRAKNQGRCLVILSRQDEIHDNQKTAQELQDYYDIVWDDTQTHKFKKISHHLQAMKAFKAA</sequence>
<evidence type="ECO:0000255" key="1">
    <source>
        <dbReference type="HAMAP-Rule" id="MF_01047"/>
    </source>
</evidence>
<name>Y2682_VIBC3</name>
<accession>A5F706</accession>
<accession>C3M1U5</accession>
<organism>
    <name type="scientific">Vibrio cholerae serotype O1 (strain ATCC 39541 / Classical Ogawa 395 / O395)</name>
    <dbReference type="NCBI Taxonomy" id="345073"/>
    <lineage>
        <taxon>Bacteria</taxon>
        <taxon>Pseudomonadati</taxon>
        <taxon>Pseudomonadota</taxon>
        <taxon>Gammaproteobacteria</taxon>
        <taxon>Vibrionales</taxon>
        <taxon>Vibrionaceae</taxon>
        <taxon>Vibrio</taxon>
    </lineage>
</organism>
<proteinExistence type="inferred from homology"/>
<comment type="similarity">
    <text evidence="1">Belongs to the UPF0227 family.</text>
</comment>
<protein>
    <recommendedName>
        <fullName evidence="1">UPF0227 protein VC0395_A1482/VC395_2007</fullName>
    </recommendedName>
</protein>
<dbReference type="EMBL" id="CP000627">
    <property type="protein sequence ID" value="ABQ20336.1"/>
    <property type="molecule type" value="Genomic_DNA"/>
</dbReference>
<dbReference type="EMBL" id="CP001235">
    <property type="protein sequence ID" value="ACP10000.1"/>
    <property type="molecule type" value="Genomic_DNA"/>
</dbReference>
<dbReference type="SMR" id="A5F706"/>
<dbReference type="ESTHER" id="vibch-y1892">
    <property type="family name" value="abh_upf00227"/>
</dbReference>
<dbReference type="KEGG" id="vco:VC0395_A1482"/>
<dbReference type="KEGG" id="vcr:VC395_2007"/>
<dbReference type="PATRIC" id="fig|345073.21.peg.1940"/>
<dbReference type="eggNOG" id="COG3150">
    <property type="taxonomic scope" value="Bacteria"/>
</dbReference>
<dbReference type="HOGENOM" id="CLU_128769_0_0_6"/>
<dbReference type="OrthoDB" id="6469735at2"/>
<dbReference type="Proteomes" id="UP000000249">
    <property type="component" value="Chromosome 2"/>
</dbReference>
<dbReference type="Gene3D" id="3.40.50.1820">
    <property type="entry name" value="alpha/beta hydrolase"/>
    <property type="match status" value="1"/>
</dbReference>
<dbReference type="HAMAP" id="MF_01047">
    <property type="entry name" value="UPF0227"/>
    <property type="match status" value="1"/>
</dbReference>
<dbReference type="InterPro" id="IPR029058">
    <property type="entry name" value="AB_hydrolase_fold"/>
</dbReference>
<dbReference type="InterPro" id="IPR022987">
    <property type="entry name" value="UPF0227"/>
</dbReference>
<dbReference type="InterPro" id="IPR008886">
    <property type="entry name" value="UPF0227/Esterase_YqiA"/>
</dbReference>
<dbReference type="NCBIfam" id="NF003431">
    <property type="entry name" value="PRK04940.1"/>
    <property type="match status" value="1"/>
</dbReference>
<dbReference type="PANTHER" id="PTHR35602">
    <property type="entry name" value="ESTERASE YQIA-RELATED"/>
    <property type="match status" value="1"/>
</dbReference>
<dbReference type="PANTHER" id="PTHR35602:SF2">
    <property type="entry name" value="UPF0227 PROTEIN YCFP"/>
    <property type="match status" value="1"/>
</dbReference>
<dbReference type="Pfam" id="PF05728">
    <property type="entry name" value="UPF0227"/>
    <property type="match status" value="1"/>
</dbReference>
<dbReference type="SUPFAM" id="SSF53474">
    <property type="entry name" value="alpha/beta-Hydrolases"/>
    <property type="match status" value="1"/>
</dbReference>
<reference key="1">
    <citation type="submission" date="2007-03" db="EMBL/GenBank/DDBJ databases">
        <authorList>
            <person name="Heidelberg J."/>
        </authorList>
    </citation>
    <scope>NUCLEOTIDE SEQUENCE [LARGE SCALE GENOMIC DNA]</scope>
    <source>
        <strain>ATCC 39541 / Classical Ogawa 395 / O395</strain>
    </source>
</reference>
<reference key="2">
    <citation type="journal article" date="2008" name="PLoS ONE">
        <title>A recalibrated molecular clock and independent origins for the cholera pandemic clones.</title>
        <authorList>
            <person name="Feng L."/>
            <person name="Reeves P.R."/>
            <person name="Lan R."/>
            <person name="Ren Y."/>
            <person name="Gao C."/>
            <person name="Zhou Z."/>
            <person name="Ren Y."/>
            <person name="Cheng J."/>
            <person name="Wang W."/>
            <person name="Wang J."/>
            <person name="Qian W."/>
            <person name="Li D."/>
            <person name="Wang L."/>
        </authorList>
    </citation>
    <scope>NUCLEOTIDE SEQUENCE [LARGE SCALE GENOMIC DNA]</scope>
    <source>
        <strain>ATCC 39541 / Classical Ogawa 395 / O395</strain>
    </source>
</reference>